<keyword id="KW-0067">ATP-binding</keyword>
<keyword id="KW-0436">Ligase</keyword>
<keyword id="KW-0547">Nucleotide-binding</keyword>
<keyword id="KW-0648">Protein biosynthesis</keyword>
<keyword id="KW-1185">Reference proteome</keyword>
<dbReference type="EC" id="6.3.5.-" evidence="1"/>
<dbReference type="EMBL" id="CP001032">
    <property type="protein sequence ID" value="ACB75641.1"/>
    <property type="molecule type" value="Genomic_DNA"/>
</dbReference>
<dbReference type="RefSeq" id="WP_012375178.1">
    <property type="nucleotide sequence ID" value="NC_010571.1"/>
</dbReference>
<dbReference type="SMR" id="B1ZQN2"/>
<dbReference type="STRING" id="452637.Oter_2359"/>
<dbReference type="KEGG" id="ote:Oter_2359"/>
<dbReference type="eggNOG" id="COG0721">
    <property type="taxonomic scope" value="Bacteria"/>
</dbReference>
<dbReference type="HOGENOM" id="CLU_105899_1_2_0"/>
<dbReference type="OrthoDB" id="9813938at2"/>
<dbReference type="Proteomes" id="UP000007013">
    <property type="component" value="Chromosome"/>
</dbReference>
<dbReference type="GO" id="GO:0050566">
    <property type="term" value="F:asparaginyl-tRNA synthase (glutamine-hydrolyzing) activity"/>
    <property type="evidence" value="ECO:0007669"/>
    <property type="project" value="RHEA"/>
</dbReference>
<dbReference type="GO" id="GO:0005524">
    <property type="term" value="F:ATP binding"/>
    <property type="evidence" value="ECO:0007669"/>
    <property type="project" value="UniProtKB-KW"/>
</dbReference>
<dbReference type="GO" id="GO:0050567">
    <property type="term" value="F:glutaminyl-tRNA synthase (glutamine-hydrolyzing) activity"/>
    <property type="evidence" value="ECO:0007669"/>
    <property type="project" value="UniProtKB-UniRule"/>
</dbReference>
<dbReference type="GO" id="GO:0070681">
    <property type="term" value="P:glutaminyl-tRNAGln biosynthesis via transamidation"/>
    <property type="evidence" value="ECO:0007669"/>
    <property type="project" value="TreeGrafter"/>
</dbReference>
<dbReference type="GO" id="GO:0006450">
    <property type="term" value="P:regulation of translational fidelity"/>
    <property type="evidence" value="ECO:0007669"/>
    <property type="project" value="InterPro"/>
</dbReference>
<dbReference type="GO" id="GO:0006412">
    <property type="term" value="P:translation"/>
    <property type="evidence" value="ECO:0007669"/>
    <property type="project" value="UniProtKB-UniRule"/>
</dbReference>
<dbReference type="Gene3D" id="1.10.20.60">
    <property type="entry name" value="Glu-tRNAGln amidotransferase C subunit, N-terminal domain"/>
    <property type="match status" value="1"/>
</dbReference>
<dbReference type="HAMAP" id="MF_00122">
    <property type="entry name" value="GatC"/>
    <property type="match status" value="1"/>
</dbReference>
<dbReference type="InterPro" id="IPR036113">
    <property type="entry name" value="Asp/Glu-ADT_sf_sub_c"/>
</dbReference>
<dbReference type="InterPro" id="IPR003837">
    <property type="entry name" value="GatC"/>
</dbReference>
<dbReference type="NCBIfam" id="TIGR00135">
    <property type="entry name" value="gatC"/>
    <property type="match status" value="1"/>
</dbReference>
<dbReference type="PANTHER" id="PTHR15004">
    <property type="entry name" value="GLUTAMYL-TRNA(GLN) AMIDOTRANSFERASE SUBUNIT C, MITOCHONDRIAL"/>
    <property type="match status" value="1"/>
</dbReference>
<dbReference type="PANTHER" id="PTHR15004:SF0">
    <property type="entry name" value="GLUTAMYL-TRNA(GLN) AMIDOTRANSFERASE SUBUNIT C, MITOCHONDRIAL"/>
    <property type="match status" value="1"/>
</dbReference>
<dbReference type="Pfam" id="PF02686">
    <property type="entry name" value="GatC"/>
    <property type="match status" value="1"/>
</dbReference>
<dbReference type="SUPFAM" id="SSF141000">
    <property type="entry name" value="Glu-tRNAGln amidotransferase C subunit"/>
    <property type="match status" value="1"/>
</dbReference>
<gene>
    <name evidence="1" type="primary">gatC</name>
    <name type="ordered locus">Oter_2359</name>
</gene>
<sequence>MATDLNIDHVANLARLALTPEEKATFAQQLGDVLHHIEQLAKVDVAGVEPTAHAFAVTNVWADDAPQPGLSVEAALKNAPAQREHMVVVPKVVE</sequence>
<comment type="function">
    <text evidence="1">Allows the formation of correctly charged Asn-tRNA(Asn) or Gln-tRNA(Gln) through the transamidation of misacylated Asp-tRNA(Asn) or Glu-tRNA(Gln) in organisms which lack either or both of asparaginyl-tRNA or glutaminyl-tRNA synthetases. The reaction takes place in the presence of glutamine and ATP through an activated phospho-Asp-tRNA(Asn) or phospho-Glu-tRNA(Gln).</text>
</comment>
<comment type="catalytic activity">
    <reaction evidence="1">
        <text>L-glutamyl-tRNA(Gln) + L-glutamine + ATP + H2O = L-glutaminyl-tRNA(Gln) + L-glutamate + ADP + phosphate + H(+)</text>
        <dbReference type="Rhea" id="RHEA:17521"/>
        <dbReference type="Rhea" id="RHEA-COMP:9681"/>
        <dbReference type="Rhea" id="RHEA-COMP:9684"/>
        <dbReference type="ChEBI" id="CHEBI:15377"/>
        <dbReference type="ChEBI" id="CHEBI:15378"/>
        <dbReference type="ChEBI" id="CHEBI:29985"/>
        <dbReference type="ChEBI" id="CHEBI:30616"/>
        <dbReference type="ChEBI" id="CHEBI:43474"/>
        <dbReference type="ChEBI" id="CHEBI:58359"/>
        <dbReference type="ChEBI" id="CHEBI:78520"/>
        <dbReference type="ChEBI" id="CHEBI:78521"/>
        <dbReference type="ChEBI" id="CHEBI:456216"/>
    </reaction>
</comment>
<comment type="catalytic activity">
    <reaction evidence="1">
        <text>L-aspartyl-tRNA(Asn) + L-glutamine + ATP + H2O = L-asparaginyl-tRNA(Asn) + L-glutamate + ADP + phosphate + 2 H(+)</text>
        <dbReference type="Rhea" id="RHEA:14513"/>
        <dbReference type="Rhea" id="RHEA-COMP:9674"/>
        <dbReference type="Rhea" id="RHEA-COMP:9677"/>
        <dbReference type="ChEBI" id="CHEBI:15377"/>
        <dbReference type="ChEBI" id="CHEBI:15378"/>
        <dbReference type="ChEBI" id="CHEBI:29985"/>
        <dbReference type="ChEBI" id="CHEBI:30616"/>
        <dbReference type="ChEBI" id="CHEBI:43474"/>
        <dbReference type="ChEBI" id="CHEBI:58359"/>
        <dbReference type="ChEBI" id="CHEBI:78515"/>
        <dbReference type="ChEBI" id="CHEBI:78516"/>
        <dbReference type="ChEBI" id="CHEBI:456216"/>
    </reaction>
</comment>
<comment type="subunit">
    <text evidence="1">Heterotrimer of A, B and C subunits.</text>
</comment>
<comment type="similarity">
    <text evidence="1">Belongs to the GatC family.</text>
</comment>
<evidence type="ECO:0000255" key="1">
    <source>
        <dbReference type="HAMAP-Rule" id="MF_00122"/>
    </source>
</evidence>
<organism>
    <name type="scientific">Opitutus terrae (strain DSM 11246 / JCM 15787 / PB90-1)</name>
    <dbReference type="NCBI Taxonomy" id="452637"/>
    <lineage>
        <taxon>Bacteria</taxon>
        <taxon>Pseudomonadati</taxon>
        <taxon>Verrucomicrobiota</taxon>
        <taxon>Opitutia</taxon>
        <taxon>Opitutales</taxon>
        <taxon>Opitutaceae</taxon>
        <taxon>Opitutus</taxon>
    </lineage>
</organism>
<proteinExistence type="inferred from homology"/>
<name>GATC_OPITP</name>
<reference key="1">
    <citation type="journal article" date="2011" name="J. Bacteriol.">
        <title>Genome sequence of the verrucomicrobium Opitutus terrae PB90-1, an abundant inhabitant of rice paddy soil ecosystems.</title>
        <authorList>
            <person name="van Passel M.W."/>
            <person name="Kant R."/>
            <person name="Palva A."/>
            <person name="Copeland A."/>
            <person name="Lucas S."/>
            <person name="Lapidus A."/>
            <person name="Glavina del Rio T."/>
            <person name="Pitluck S."/>
            <person name="Goltsman E."/>
            <person name="Clum A."/>
            <person name="Sun H."/>
            <person name="Schmutz J."/>
            <person name="Larimer F.W."/>
            <person name="Land M.L."/>
            <person name="Hauser L."/>
            <person name="Kyrpides N."/>
            <person name="Mikhailova N."/>
            <person name="Richardson P.P."/>
            <person name="Janssen P.H."/>
            <person name="de Vos W.M."/>
            <person name="Smidt H."/>
        </authorList>
    </citation>
    <scope>NUCLEOTIDE SEQUENCE [LARGE SCALE GENOMIC DNA]</scope>
    <source>
        <strain>DSM 11246 / JCM 15787 / PB90-1</strain>
    </source>
</reference>
<protein>
    <recommendedName>
        <fullName evidence="1">Aspartyl/glutamyl-tRNA(Asn/Gln) amidotransferase subunit C</fullName>
        <shortName evidence="1">Asp/Glu-ADT subunit C</shortName>
        <ecNumber evidence="1">6.3.5.-</ecNumber>
    </recommendedName>
</protein>
<feature type="chain" id="PRO_1000122578" description="Aspartyl/glutamyl-tRNA(Asn/Gln) amidotransferase subunit C">
    <location>
        <begin position="1"/>
        <end position="94"/>
    </location>
</feature>
<accession>B1ZQN2</accession>